<evidence type="ECO:0000255" key="1">
    <source>
        <dbReference type="HAMAP-Rule" id="MF_00255"/>
    </source>
</evidence>
<keyword id="KW-0030">Aminoacyl-tRNA synthetase</keyword>
<keyword id="KW-0067">ATP-binding</keyword>
<keyword id="KW-0963">Cytoplasm</keyword>
<keyword id="KW-0436">Ligase</keyword>
<keyword id="KW-0547">Nucleotide-binding</keyword>
<keyword id="KW-0648">Protein biosynthesis</keyword>
<keyword id="KW-1185">Reference proteome</keyword>
<dbReference type="EC" id="6.1.1.14" evidence="1"/>
<dbReference type="EMBL" id="CP000494">
    <property type="protein sequence ID" value="ABQ34528.1"/>
    <property type="molecule type" value="Genomic_DNA"/>
</dbReference>
<dbReference type="RefSeq" id="WP_012042556.1">
    <property type="nucleotide sequence ID" value="NC_009485.1"/>
</dbReference>
<dbReference type="SMR" id="A5EED4"/>
<dbReference type="STRING" id="288000.BBta_2357"/>
<dbReference type="KEGG" id="bbt:BBta_2357"/>
<dbReference type="eggNOG" id="COG0751">
    <property type="taxonomic scope" value="Bacteria"/>
</dbReference>
<dbReference type="HOGENOM" id="CLU_007220_2_1_5"/>
<dbReference type="OrthoDB" id="9775440at2"/>
<dbReference type="Proteomes" id="UP000000246">
    <property type="component" value="Chromosome"/>
</dbReference>
<dbReference type="GO" id="GO:0005829">
    <property type="term" value="C:cytosol"/>
    <property type="evidence" value="ECO:0007669"/>
    <property type="project" value="TreeGrafter"/>
</dbReference>
<dbReference type="GO" id="GO:0004814">
    <property type="term" value="F:arginine-tRNA ligase activity"/>
    <property type="evidence" value="ECO:0007669"/>
    <property type="project" value="InterPro"/>
</dbReference>
<dbReference type="GO" id="GO:0005524">
    <property type="term" value="F:ATP binding"/>
    <property type="evidence" value="ECO:0007669"/>
    <property type="project" value="UniProtKB-UniRule"/>
</dbReference>
<dbReference type="GO" id="GO:0004820">
    <property type="term" value="F:glycine-tRNA ligase activity"/>
    <property type="evidence" value="ECO:0007669"/>
    <property type="project" value="UniProtKB-UniRule"/>
</dbReference>
<dbReference type="GO" id="GO:0006420">
    <property type="term" value="P:arginyl-tRNA aminoacylation"/>
    <property type="evidence" value="ECO:0007669"/>
    <property type="project" value="InterPro"/>
</dbReference>
<dbReference type="GO" id="GO:0006426">
    <property type="term" value="P:glycyl-tRNA aminoacylation"/>
    <property type="evidence" value="ECO:0007669"/>
    <property type="project" value="UniProtKB-UniRule"/>
</dbReference>
<dbReference type="HAMAP" id="MF_00255">
    <property type="entry name" value="Gly_tRNA_synth_beta"/>
    <property type="match status" value="1"/>
</dbReference>
<dbReference type="InterPro" id="IPR008909">
    <property type="entry name" value="DALR_anticod-bd"/>
</dbReference>
<dbReference type="InterPro" id="IPR015944">
    <property type="entry name" value="Gly-tRNA-synth_bsu"/>
</dbReference>
<dbReference type="InterPro" id="IPR006194">
    <property type="entry name" value="Gly-tRNA-synth_heterodimer"/>
</dbReference>
<dbReference type="NCBIfam" id="TIGR00211">
    <property type="entry name" value="glyS"/>
    <property type="match status" value="1"/>
</dbReference>
<dbReference type="PANTHER" id="PTHR30075:SF2">
    <property type="entry name" value="GLYCINE--TRNA LIGASE, CHLOROPLASTIC_MITOCHONDRIAL 2"/>
    <property type="match status" value="1"/>
</dbReference>
<dbReference type="PANTHER" id="PTHR30075">
    <property type="entry name" value="GLYCYL-TRNA SYNTHETASE"/>
    <property type="match status" value="1"/>
</dbReference>
<dbReference type="Pfam" id="PF05746">
    <property type="entry name" value="DALR_1"/>
    <property type="match status" value="1"/>
</dbReference>
<dbReference type="Pfam" id="PF02092">
    <property type="entry name" value="tRNA_synt_2f"/>
    <property type="match status" value="1"/>
</dbReference>
<dbReference type="PRINTS" id="PR01045">
    <property type="entry name" value="TRNASYNTHGB"/>
</dbReference>
<dbReference type="SUPFAM" id="SSF109604">
    <property type="entry name" value="HD-domain/PDEase-like"/>
    <property type="match status" value="1"/>
</dbReference>
<dbReference type="PROSITE" id="PS50861">
    <property type="entry name" value="AA_TRNA_LIGASE_II_GLYAB"/>
    <property type="match status" value="1"/>
</dbReference>
<reference key="1">
    <citation type="journal article" date="2007" name="Science">
        <title>Legumes symbioses: absence of nod genes in photosynthetic bradyrhizobia.</title>
        <authorList>
            <person name="Giraud E."/>
            <person name="Moulin L."/>
            <person name="Vallenet D."/>
            <person name="Barbe V."/>
            <person name="Cytryn E."/>
            <person name="Avarre J.-C."/>
            <person name="Jaubert M."/>
            <person name="Simon D."/>
            <person name="Cartieaux F."/>
            <person name="Prin Y."/>
            <person name="Bena G."/>
            <person name="Hannibal L."/>
            <person name="Fardoux J."/>
            <person name="Kojadinovic M."/>
            <person name="Vuillet L."/>
            <person name="Lajus A."/>
            <person name="Cruveiller S."/>
            <person name="Rouy Z."/>
            <person name="Mangenot S."/>
            <person name="Segurens B."/>
            <person name="Dossat C."/>
            <person name="Franck W.L."/>
            <person name="Chang W.-S."/>
            <person name="Saunders E."/>
            <person name="Bruce D."/>
            <person name="Richardson P."/>
            <person name="Normand P."/>
            <person name="Dreyfus B."/>
            <person name="Pignol D."/>
            <person name="Stacey G."/>
            <person name="Emerich D."/>
            <person name="Vermeglio A."/>
            <person name="Medigue C."/>
            <person name="Sadowsky M."/>
        </authorList>
    </citation>
    <scope>NUCLEOTIDE SEQUENCE [LARGE SCALE GENOMIC DNA]</scope>
    <source>
        <strain>BTAi1 / ATCC BAA-1182</strain>
    </source>
</reference>
<gene>
    <name evidence="1" type="primary">glyS</name>
    <name type="ordered locus">BBta_2357</name>
</gene>
<proteinExistence type="inferred from homology"/>
<sequence>MPDLLLELFSEEIPARMQAKAAEDLRRMVTDKLVAEGLVYEGAKAFATPRRLALTVHGIPARQADLKEERKGPRVGGPDAAIQGFLKATGLSSLEEATIQRDPKKGDFYVALIEKPGRATLDVLAEMLPVIVRTFPWPKSMRWGKRSEKPGALNWVRPLHAITATFGLETEEPDVVSFSVDGIEAGQTTYGHRFMAPAAISVRRFEDYEAKLLDAKVVLDPQRRKDTIVTDAKQLAFAQGYELVEDPVLLDEVSGLVEWPVVLMGSFDPEYLKVPAEVIRATIRNNQKCFVVRDPKTGGLAPKFILTANIEATDGGKTIIAGNERVIRARLSDAKFFYETDLKTRLEDRLPKFEQIVFHEKLGTQAARIARIEKLAAEIAPLVGADAAKTARAAKLAKADLLTEVVGEFPEVQGLMGKYYALAQGEDVSVAAACEEHYKPQGPGDRVPTDPVSVAVALADKLDTLVGFWAIDEKPTGSKDPYALRRAALGVIRLITENSLRLSLLQVAGSALAGLHVKSELDAGKLSADLLSFFADRLKVQLREQGARHDLVDAVFALGGQDDLLMVVRRVEALGKFLETDDGKNLLAGTKRASNILAIEEKKDKRKFDGAPDAALYRLDEEKALAKAIGEVGSEAGTAVAKEDFAAAMHAMAKLRPAVDAFFDKVKVNDDDAAIRENRLKLLNEIRNATRAVADFSKIEG</sequence>
<comment type="catalytic activity">
    <reaction evidence="1">
        <text>tRNA(Gly) + glycine + ATP = glycyl-tRNA(Gly) + AMP + diphosphate</text>
        <dbReference type="Rhea" id="RHEA:16013"/>
        <dbReference type="Rhea" id="RHEA-COMP:9664"/>
        <dbReference type="Rhea" id="RHEA-COMP:9683"/>
        <dbReference type="ChEBI" id="CHEBI:30616"/>
        <dbReference type="ChEBI" id="CHEBI:33019"/>
        <dbReference type="ChEBI" id="CHEBI:57305"/>
        <dbReference type="ChEBI" id="CHEBI:78442"/>
        <dbReference type="ChEBI" id="CHEBI:78522"/>
        <dbReference type="ChEBI" id="CHEBI:456215"/>
        <dbReference type="EC" id="6.1.1.14"/>
    </reaction>
</comment>
<comment type="subunit">
    <text evidence="1">Tetramer of two alpha and two beta subunits.</text>
</comment>
<comment type="subcellular location">
    <subcellularLocation>
        <location evidence="1">Cytoplasm</location>
    </subcellularLocation>
</comment>
<comment type="similarity">
    <text evidence="1">Belongs to the class-II aminoacyl-tRNA synthetase family.</text>
</comment>
<name>SYGB_BRASB</name>
<accession>A5EED4</accession>
<protein>
    <recommendedName>
        <fullName evidence="1">Glycine--tRNA ligase beta subunit</fullName>
        <ecNumber evidence="1">6.1.1.14</ecNumber>
    </recommendedName>
    <alternativeName>
        <fullName evidence="1">Glycyl-tRNA synthetase beta subunit</fullName>
        <shortName evidence="1">GlyRS</shortName>
    </alternativeName>
</protein>
<feature type="chain" id="PRO_1000101267" description="Glycine--tRNA ligase beta subunit">
    <location>
        <begin position="1"/>
        <end position="701"/>
    </location>
</feature>
<organism>
    <name type="scientific">Bradyrhizobium sp. (strain BTAi1 / ATCC BAA-1182)</name>
    <dbReference type="NCBI Taxonomy" id="288000"/>
    <lineage>
        <taxon>Bacteria</taxon>
        <taxon>Pseudomonadati</taxon>
        <taxon>Pseudomonadota</taxon>
        <taxon>Alphaproteobacteria</taxon>
        <taxon>Hyphomicrobiales</taxon>
        <taxon>Nitrobacteraceae</taxon>
        <taxon>Bradyrhizobium</taxon>
    </lineage>
</organism>